<accession>Q4WDV4</accession>
<sequence>MALNSTDNRWSTGEDTPSEAQLPDGEERLDAAPDEKVTAEDIDRRLTNLVRKISAQSRRSHHSFLFGAGENSSLNPQSPSFDARKWARAFYNARYRQDDGHPPRVVGVAFKNLNVFGYGSPVDYQMSVGNALLKVPTMVRQALGGGKQRVDILHDVEGLVLPGEQLCVLGPPGSGCSTFLRTIAGETHGLNVDAASYINYHGISPKQMSTAFRGEAIYTAEVDAHFPMLSVGDTLYFAALARAPQVIPGGLSRQEYAKHLRDVIMAMFGIGHTINTRVGNDFVRGVSGGERKRVTIAEAALGYSPLQCWDNSTRGLDSANAVEFCRTLRTQSDVFGITSCVAIYQAPQAAYDLFDKVLVLYEGWQIYFGAAHEAQAYFEQLGFQCPESQTTADFLTSMCSPAERIVKPGFEHMAPRTPEEFAQRWKESPQRQSLLHAIEKYSTEHPLDGPDLHQFALSRRAEKSHRQREKSPYTLSYRGQVKLCLWREWQRLKNDPSVTLAMLIGNFFEALIIASIFYNLTGDTSSFYYRGALLFMMVLLNAFASVLEILTLYEKRTIVEKQSRYAYYHPSAEALSSFIMSLPYKFVNSSLVNLTLYFMSNLRREPGPFFFFLLISTSMMLAMSMFFRWFASLTKTIDQALAPSSIILLALVLYTGFTIPVSYMRGWASWIRWLNPVSYGFEAVMINEFHGREFPCSSFVPSGPGYEDVSRTQRVCSTVGATSGSDVVSGDVFVRSSYGYVNSHRWRNFGIIIAMTVFLAVCHFVTTELVASKRSKGEVLVFRRGSAHIARAKQGQRDEEQPSASAVPSEKYSEAPTPVEGVETQTSIFHWEDVCYDVKIKNETRRILDHVDGWIKPGTLTALMGVSGAGKTTLLDVLASRTTVGVVTGETLVDGRQRDSSFQRKTGYVQQQDLHLATTTVREALEFSALLRQPPQYSREEKLEYVEKVIDLLHMRDYADAIVGVPGEGLNVERRKRLTIGVELAARPKLLLFLDEPTSGLDSQTSWSICNLMETLTRNGQAILCTIHQPSAMLFQRFDRLLLLAKGGKTVYFGEIGSGARTLMDYFVRNGGPPCPKGANPAEHMLEVIGAAPGAHTDIDWPAVWRNSPEYQQVRQELSRLRQLASQPSSVHSDDPSSYSEFAAPFPAQLGQVGRRVFQQYWRTPSYLYSKAILTVGSSIFIGFSFFKGDNTAQGLQNQVFGVFVFLFVVIQLIFQIIPTFVTQRTLYESRERQSKTYSWQAFVLSNIAVEFAWNTIAAVLCFLAWFYPVGLYRNAEYTDSVHSRSTLVFLIIWATFLFASSFAHLLIAGVESAELASALANIMGIMMYAFCGILAGPHALPGFWIFMYRVNPFTYLVSGLLSASLGDAPMHCAANEFLAFSPPANRTCGEYMEDYMALAGGYLLDSAARGDEQCQYCRVDNTSQYLRNFSIDFATRWRDFGLLWVYVAVNTFGAVFLYWLCRVPKGKKRL</sequence>
<reference key="1">
    <citation type="journal article" date="2005" name="Nature">
        <title>Genomic sequence of the pathogenic and allergenic filamentous fungus Aspergillus fumigatus.</title>
        <authorList>
            <person name="Nierman W.C."/>
            <person name="Pain A."/>
            <person name="Anderson M.J."/>
            <person name="Wortman J.R."/>
            <person name="Kim H.S."/>
            <person name="Arroyo J."/>
            <person name="Berriman M."/>
            <person name="Abe K."/>
            <person name="Archer D.B."/>
            <person name="Bermejo C."/>
            <person name="Bennett J.W."/>
            <person name="Bowyer P."/>
            <person name="Chen D."/>
            <person name="Collins M."/>
            <person name="Coulsen R."/>
            <person name="Davies R."/>
            <person name="Dyer P.S."/>
            <person name="Farman M.L."/>
            <person name="Fedorova N."/>
            <person name="Fedorova N.D."/>
            <person name="Feldblyum T.V."/>
            <person name="Fischer R."/>
            <person name="Fosker N."/>
            <person name="Fraser A."/>
            <person name="Garcia J.L."/>
            <person name="Garcia M.J."/>
            <person name="Goble A."/>
            <person name="Goldman G.H."/>
            <person name="Gomi K."/>
            <person name="Griffith-Jones S."/>
            <person name="Gwilliam R."/>
            <person name="Haas B.J."/>
            <person name="Haas H."/>
            <person name="Harris D.E."/>
            <person name="Horiuchi H."/>
            <person name="Huang J."/>
            <person name="Humphray S."/>
            <person name="Jimenez J."/>
            <person name="Keller N."/>
            <person name="Khouri H."/>
            <person name="Kitamoto K."/>
            <person name="Kobayashi T."/>
            <person name="Konzack S."/>
            <person name="Kulkarni R."/>
            <person name="Kumagai T."/>
            <person name="Lafton A."/>
            <person name="Latge J.-P."/>
            <person name="Li W."/>
            <person name="Lord A."/>
            <person name="Lu C."/>
            <person name="Majoros W.H."/>
            <person name="May G.S."/>
            <person name="Miller B.L."/>
            <person name="Mohamoud Y."/>
            <person name="Molina M."/>
            <person name="Monod M."/>
            <person name="Mouyna I."/>
            <person name="Mulligan S."/>
            <person name="Murphy L.D."/>
            <person name="O'Neil S."/>
            <person name="Paulsen I."/>
            <person name="Penalva M.A."/>
            <person name="Pertea M."/>
            <person name="Price C."/>
            <person name="Pritchard B.L."/>
            <person name="Quail M.A."/>
            <person name="Rabbinowitsch E."/>
            <person name="Rawlins N."/>
            <person name="Rajandream M.A."/>
            <person name="Reichard U."/>
            <person name="Renauld H."/>
            <person name="Robson G.D."/>
            <person name="Rodriguez de Cordoba S."/>
            <person name="Rodriguez-Pena J.M."/>
            <person name="Ronning C.M."/>
            <person name="Rutter S."/>
            <person name="Salzberg S.L."/>
            <person name="Sanchez M."/>
            <person name="Sanchez-Ferrero J.C."/>
            <person name="Saunders D."/>
            <person name="Seeger K."/>
            <person name="Squares R."/>
            <person name="Squares S."/>
            <person name="Takeuchi M."/>
            <person name="Tekaia F."/>
            <person name="Turner G."/>
            <person name="Vazquez de Aldana C.R."/>
            <person name="Weidman J."/>
            <person name="White O."/>
            <person name="Woodward J.R."/>
            <person name="Yu J.-H."/>
            <person name="Fraser C.M."/>
            <person name="Galagan J.E."/>
            <person name="Asai K."/>
            <person name="Machida M."/>
            <person name="Hall N."/>
            <person name="Barrell B.G."/>
            <person name="Denning D.W."/>
        </authorList>
    </citation>
    <scope>NUCLEOTIDE SEQUENCE [LARGE SCALE GENOMIC DNA]</scope>
    <source>
        <strain>ATCC MYA-4609 / CBS 101355 / FGSC A1100 / Af293</strain>
    </source>
</reference>
<reference key="2">
    <citation type="journal article" date="2020" name="MBio">
        <title>Characterization of the efflux capability and substrate specificity of Aspergillus fumigatus PDR5-like ABC transporters expressed in Saccharomyces cerevisiae.</title>
        <authorList>
            <person name="Esquivel B.D."/>
            <person name="Rybak J.M."/>
            <person name="Barker K.S."/>
            <person name="Fortwendel J.R."/>
            <person name="Rogers P.D."/>
            <person name="White T.C."/>
        </authorList>
    </citation>
    <scope>FUNCTION</scope>
    <scope>CATALYTIC ACTIVITY</scope>
    <scope>SUBSTRATE SPECIFICITY</scope>
    <scope>ACTIVITY REGULATION</scope>
</reference>
<proteinExistence type="evidence at protein level"/>
<feature type="chain" id="PRO_0000452659" description="ABC multidrug transporter F">
    <location>
        <begin position="1"/>
        <end position="1471"/>
    </location>
</feature>
<feature type="transmembrane region" description="Helical" evidence="1">
    <location>
        <begin position="498"/>
        <end position="518"/>
    </location>
</feature>
<feature type="transmembrane region" description="Helical" evidence="1">
    <location>
        <begin position="532"/>
        <end position="552"/>
    </location>
</feature>
<feature type="transmembrane region" description="Helical" evidence="1">
    <location>
        <begin position="578"/>
        <end position="598"/>
    </location>
</feature>
<feature type="transmembrane region" description="Helical" evidence="1">
    <location>
        <begin position="607"/>
        <end position="627"/>
    </location>
</feature>
<feature type="transmembrane region" description="Helical" evidence="1">
    <location>
        <begin position="641"/>
        <end position="661"/>
    </location>
</feature>
<feature type="transmembrane region" description="Helical" evidence="1">
    <location>
        <begin position="751"/>
        <end position="771"/>
    </location>
</feature>
<feature type="transmembrane region" description="Helical" evidence="1">
    <location>
        <begin position="1167"/>
        <end position="1187"/>
    </location>
</feature>
<feature type="transmembrane region" description="Helical" evidence="1">
    <location>
        <begin position="1201"/>
        <end position="1221"/>
    </location>
</feature>
<feature type="transmembrane region" description="Helical" evidence="1">
    <location>
        <begin position="1252"/>
        <end position="1272"/>
    </location>
</feature>
<feature type="transmembrane region" description="Helical" evidence="1">
    <location>
        <begin position="1288"/>
        <end position="1308"/>
    </location>
</feature>
<feature type="transmembrane region" description="Helical" evidence="1">
    <location>
        <begin position="1326"/>
        <end position="1346"/>
    </location>
</feature>
<feature type="transmembrane region" description="Helical" evidence="1">
    <location>
        <begin position="1441"/>
        <end position="1461"/>
    </location>
</feature>
<feature type="domain" description="ABC transporter 1" evidence="2">
    <location>
        <begin position="133"/>
        <end position="387"/>
    </location>
</feature>
<feature type="domain" description="ABC transporter 2" evidence="2">
    <location>
        <begin position="829"/>
        <end position="1071"/>
    </location>
</feature>
<feature type="region of interest" description="Disordered" evidence="4">
    <location>
        <begin position="1"/>
        <end position="40"/>
    </location>
</feature>
<feature type="region of interest" description="Disordered" evidence="4">
    <location>
        <begin position="791"/>
        <end position="819"/>
    </location>
</feature>
<feature type="compositionally biased region" description="Polar residues" evidence="4">
    <location>
        <begin position="1"/>
        <end position="19"/>
    </location>
</feature>
<feature type="compositionally biased region" description="Basic and acidic residues" evidence="4">
    <location>
        <begin position="25"/>
        <end position="40"/>
    </location>
</feature>
<feature type="binding site" evidence="2">
    <location>
        <begin position="865"/>
        <end position="872"/>
    </location>
    <ligand>
        <name>ATP</name>
        <dbReference type="ChEBI" id="CHEBI:30616"/>
    </ligand>
</feature>
<feature type="glycosylation site" description="N-linked (GlcNAc...) asparagine" evidence="3">
    <location>
        <position position="4"/>
    </location>
</feature>
<feature type="glycosylation site" description="N-linked (GlcNAc...) asparagine" evidence="3">
    <location>
        <position position="71"/>
    </location>
</feature>
<feature type="glycosylation site" description="N-linked (GlcNAc...) asparagine" evidence="3">
    <location>
        <position position="311"/>
    </location>
</feature>
<feature type="glycosylation site" description="N-linked (GlcNAc...) asparagine" evidence="3">
    <location>
        <position position="519"/>
    </location>
</feature>
<feature type="glycosylation site" description="N-linked (GlcNAc...) asparagine" evidence="3">
    <location>
        <position position="842"/>
    </location>
</feature>
<feature type="glycosylation site" description="N-linked (GlcNAc...) asparagine" evidence="3">
    <location>
        <position position="1386"/>
    </location>
</feature>
<feature type="glycosylation site" description="N-linked (GlcNAc...) asparagine" evidence="3">
    <location>
        <position position="1422"/>
    </location>
</feature>
<feature type="glycosylation site" description="N-linked (GlcNAc...) asparagine" evidence="3">
    <location>
        <position position="1429"/>
    </location>
</feature>
<evidence type="ECO:0000255" key="1"/>
<evidence type="ECO:0000255" key="2">
    <source>
        <dbReference type="PROSITE-ProRule" id="PRU00434"/>
    </source>
</evidence>
<evidence type="ECO:0000255" key="3">
    <source>
        <dbReference type="PROSITE-ProRule" id="PRU00498"/>
    </source>
</evidence>
<evidence type="ECO:0000256" key="4">
    <source>
        <dbReference type="SAM" id="MobiDB-lite"/>
    </source>
</evidence>
<evidence type="ECO:0000269" key="5">
    <source>
    </source>
</evidence>
<evidence type="ECO:0000303" key="6">
    <source>
    </source>
</evidence>
<evidence type="ECO:0000305" key="7"/>
<evidence type="ECO:0000305" key="8">
    <source>
    </source>
</evidence>
<name>ABCF_ASPFU</name>
<comment type="function">
    <text evidence="5">Pleiotropic ABC efflux transporter that shows a strong substrate specificity for the azole class of drugs such as lotrimazole (CLT), fluconazole (FLC), itraconazole (ITC), ketoconazole (KTC), posaconazole (POS), econazole (ECON), metconazole (MET), miconazole (MCZ), prochloraz (PCLZ), and tebuconazole (TEBZ).</text>
</comment>
<comment type="catalytic activity">
    <reaction evidence="5">
        <text>fluconazole(in) + ATP + H2O = fluconazole(out) + ADP + phosphate + H(+)</text>
        <dbReference type="Rhea" id="RHEA:61916"/>
        <dbReference type="ChEBI" id="CHEBI:15377"/>
        <dbReference type="ChEBI" id="CHEBI:15378"/>
        <dbReference type="ChEBI" id="CHEBI:30616"/>
        <dbReference type="ChEBI" id="CHEBI:43474"/>
        <dbReference type="ChEBI" id="CHEBI:46081"/>
        <dbReference type="ChEBI" id="CHEBI:456216"/>
    </reaction>
    <physiologicalReaction direction="left-to-right" evidence="5">
        <dbReference type="Rhea" id="RHEA:61917"/>
    </physiologicalReaction>
</comment>
<comment type="catalytic activity">
    <reaction evidence="5">
        <text>itraconazole(in) + ATP + H2O = itraconazole(out) + ADP + phosphate + H(+)</text>
        <dbReference type="Rhea" id="RHEA:33503"/>
        <dbReference type="ChEBI" id="CHEBI:6076"/>
        <dbReference type="ChEBI" id="CHEBI:15377"/>
        <dbReference type="ChEBI" id="CHEBI:15378"/>
        <dbReference type="ChEBI" id="CHEBI:30616"/>
        <dbReference type="ChEBI" id="CHEBI:43474"/>
        <dbReference type="ChEBI" id="CHEBI:456216"/>
    </reaction>
    <physiologicalReaction direction="left-to-right" evidence="5">
        <dbReference type="Rhea" id="RHEA:33504"/>
    </physiologicalReaction>
</comment>
<comment type="activity regulation">
    <text evidence="5">The efflux inhibitor FK506 impairs the transport activity.</text>
</comment>
<comment type="subcellular location">
    <subcellularLocation>
        <location evidence="8">Cell membrane</location>
        <topology evidence="1">Multi-pass membrane protein</topology>
    </subcellularLocation>
</comment>
<comment type="similarity">
    <text evidence="7">Belongs to the ABC transporter superfamily. ABCG family. PDR (TC 3.A.1.205) subfamily.</text>
</comment>
<protein>
    <recommendedName>
        <fullName evidence="6">ABC multidrug transporter F</fullName>
    </recommendedName>
</protein>
<gene>
    <name evidence="6" type="primary">abcF</name>
    <name type="ORF">AFUA_5G00790</name>
</gene>
<dbReference type="EMBL" id="AAHF01000011">
    <property type="protein sequence ID" value="EAL86223.1"/>
    <property type="molecule type" value="Genomic_DNA"/>
</dbReference>
<dbReference type="RefSeq" id="XP_748261.1">
    <property type="nucleotide sequence ID" value="XM_743168.1"/>
</dbReference>
<dbReference type="SMR" id="Q4WDV4"/>
<dbReference type="FunCoup" id="Q4WDV4">
    <property type="interactions" value="361"/>
</dbReference>
<dbReference type="GlyCosmos" id="Q4WDV4">
    <property type="glycosylation" value="8 sites, No reported glycans"/>
</dbReference>
<dbReference type="EnsemblFungi" id="EAL86223">
    <property type="protein sequence ID" value="EAL86223"/>
    <property type="gene ID" value="AFUA_5G00790"/>
</dbReference>
<dbReference type="GeneID" id="3505690"/>
<dbReference type="KEGG" id="afm:AFUA_5G00790"/>
<dbReference type="VEuPathDB" id="FungiDB:Afu5g00790"/>
<dbReference type="eggNOG" id="KOG0065">
    <property type="taxonomic scope" value="Eukaryota"/>
</dbReference>
<dbReference type="HOGENOM" id="CLU_000604_35_0_1"/>
<dbReference type="InParanoid" id="Q4WDV4"/>
<dbReference type="OMA" id="KTLRTQC"/>
<dbReference type="OrthoDB" id="245989at2759"/>
<dbReference type="Proteomes" id="UP000002530">
    <property type="component" value="Chromosome 5"/>
</dbReference>
<dbReference type="GO" id="GO:0005886">
    <property type="term" value="C:plasma membrane"/>
    <property type="evidence" value="ECO:0007669"/>
    <property type="project" value="UniProtKB-SubCell"/>
</dbReference>
<dbReference type="GO" id="GO:0140359">
    <property type="term" value="F:ABC-type transporter activity"/>
    <property type="evidence" value="ECO:0007669"/>
    <property type="project" value="InterPro"/>
</dbReference>
<dbReference type="GO" id="GO:0005524">
    <property type="term" value="F:ATP binding"/>
    <property type="evidence" value="ECO:0007669"/>
    <property type="project" value="UniProtKB-KW"/>
</dbReference>
<dbReference type="GO" id="GO:0016887">
    <property type="term" value="F:ATP hydrolysis activity"/>
    <property type="evidence" value="ECO:0007669"/>
    <property type="project" value="InterPro"/>
</dbReference>
<dbReference type="CDD" id="cd03232">
    <property type="entry name" value="ABCG_PDR_domain2"/>
    <property type="match status" value="1"/>
</dbReference>
<dbReference type="FunFam" id="3.40.50.300:FF:003632">
    <property type="entry name" value="ABC multidrug transporter (Eurofung)"/>
    <property type="match status" value="1"/>
</dbReference>
<dbReference type="FunFam" id="3.40.50.300:FF:000054">
    <property type="entry name" value="ABC multidrug transporter atrF"/>
    <property type="match status" value="1"/>
</dbReference>
<dbReference type="Gene3D" id="3.40.50.300">
    <property type="entry name" value="P-loop containing nucleotide triphosphate hydrolases"/>
    <property type="match status" value="2"/>
</dbReference>
<dbReference type="InterPro" id="IPR003593">
    <property type="entry name" value="AAA+_ATPase"/>
</dbReference>
<dbReference type="InterPro" id="IPR013525">
    <property type="entry name" value="ABC2_TM"/>
</dbReference>
<dbReference type="InterPro" id="IPR029481">
    <property type="entry name" value="ABC_trans_N"/>
</dbReference>
<dbReference type="InterPro" id="IPR003439">
    <property type="entry name" value="ABC_transporter-like_ATP-bd"/>
</dbReference>
<dbReference type="InterPro" id="IPR017871">
    <property type="entry name" value="ABC_transporter-like_CS"/>
</dbReference>
<dbReference type="InterPro" id="IPR043926">
    <property type="entry name" value="ABCG_dom"/>
</dbReference>
<dbReference type="InterPro" id="IPR034003">
    <property type="entry name" value="ABCG_PDR_2"/>
</dbReference>
<dbReference type="InterPro" id="IPR027417">
    <property type="entry name" value="P-loop_NTPase"/>
</dbReference>
<dbReference type="InterPro" id="IPR010929">
    <property type="entry name" value="PDR_CDR_ABC"/>
</dbReference>
<dbReference type="PANTHER" id="PTHR19241">
    <property type="entry name" value="ATP-BINDING CASSETTE TRANSPORTER"/>
    <property type="match status" value="1"/>
</dbReference>
<dbReference type="Pfam" id="PF01061">
    <property type="entry name" value="ABC2_membrane"/>
    <property type="match status" value="2"/>
</dbReference>
<dbReference type="Pfam" id="PF19055">
    <property type="entry name" value="ABC2_membrane_7"/>
    <property type="match status" value="1"/>
</dbReference>
<dbReference type="Pfam" id="PF00005">
    <property type="entry name" value="ABC_tran"/>
    <property type="match status" value="2"/>
</dbReference>
<dbReference type="Pfam" id="PF14510">
    <property type="entry name" value="ABC_trans_N"/>
    <property type="match status" value="1"/>
</dbReference>
<dbReference type="Pfam" id="PF06422">
    <property type="entry name" value="PDR_CDR"/>
    <property type="match status" value="1"/>
</dbReference>
<dbReference type="SMART" id="SM00382">
    <property type="entry name" value="AAA"/>
    <property type="match status" value="2"/>
</dbReference>
<dbReference type="SUPFAM" id="SSF52540">
    <property type="entry name" value="P-loop containing nucleoside triphosphate hydrolases"/>
    <property type="match status" value="2"/>
</dbReference>
<dbReference type="PROSITE" id="PS00211">
    <property type="entry name" value="ABC_TRANSPORTER_1"/>
    <property type="match status" value="1"/>
</dbReference>
<dbReference type="PROSITE" id="PS50893">
    <property type="entry name" value="ABC_TRANSPORTER_2"/>
    <property type="match status" value="2"/>
</dbReference>
<organism>
    <name type="scientific">Aspergillus fumigatus (strain ATCC MYA-4609 / CBS 101355 / FGSC A1100 / Af293)</name>
    <name type="common">Neosartorya fumigata</name>
    <dbReference type="NCBI Taxonomy" id="330879"/>
    <lineage>
        <taxon>Eukaryota</taxon>
        <taxon>Fungi</taxon>
        <taxon>Dikarya</taxon>
        <taxon>Ascomycota</taxon>
        <taxon>Pezizomycotina</taxon>
        <taxon>Eurotiomycetes</taxon>
        <taxon>Eurotiomycetidae</taxon>
        <taxon>Eurotiales</taxon>
        <taxon>Aspergillaceae</taxon>
        <taxon>Aspergillus</taxon>
        <taxon>Aspergillus subgen. Fumigati</taxon>
    </lineage>
</organism>
<keyword id="KW-0067">ATP-binding</keyword>
<keyword id="KW-1003">Cell membrane</keyword>
<keyword id="KW-0325">Glycoprotein</keyword>
<keyword id="KW-0472">Membrane</keyword>
<keyword id="KW-0547">Nucleotide-binding</keyword>
<keyword id="KW-1185">Reference proteome</keyword>
<keyword id="KW-0677">Repeat</keyword>
<keyword id="KW-0812">Transmembrane</keyword>
<keyword id="KW-1133">Transmembrane helix</keyword>
<keyword id="KW-0813">Transport</keyword>